<sequence length="257" mass="29560">MDRIIEKLESGWWIVSHEQKLWLPYGELPHGLAANFDLVGQRALRIGEWQGEPVWLVLQHRRHDMGSVRQVIDQDAGLFQLAGRGVQLAEFYRSHKFCGYCGHPMHPSKTEWAMLCSHCRERYYPQIAPCIIVAIRREDSILLAQHVRHRNGVHTVLAGFVEVGETLEQAVAREVMEESGIKVKNLRYVTSQPWPFPQSLMTAFMAEYDSGEIAIDPKELLEANWYHYDDLPLLPPPGTVARRLIEDTVAMCRAEYD</sequence>
<protein>
    <recommendedName>
        <fullName evidence="1">NAD-capped RNA hydrolase NudC</fullName>
        <shortName evidence="1">DeNADding enzyme NudC</shortName>
        <ecNumber evidence="1">3.6.1.-</ecNumber>
    </recommendedName>
    <alternativeName>
        <fullName evidence="1">NADH pyrophosphatase</fullName>
        <ecNumber evidence="1">3.6.1.22</ecNumber>
    </alternativeName>
</protein>
<comment type="function">
    <text evidence="1">mRNA decapping enzyme that specifically removes the nicotinamide adenine dinucleotide (NAD) cap from a subset of mRNAs by hydrolyzing the diphosphate linkage to produce nicotinamide mononucleotide (NMN) and 5' monophosphate mRNA. The NAD-cap is present at the 5'-end of some mRNAs and stabilizes RNA against 5'-processing. Has preference for mRNAs with a 5'-end purine. Catalyzes the hydrolysis of a broad range of dinucleotide pyrophosphates.</text>
</comment>
<comment type="catalytic activity">
    <reaction evidence="1">
        <text>a 5'-end NAD(+)-phospho-ribonucleoside in mRNA + H2O = a 5'-end phospho-adenosine-phospho-ribonucleoside in mRNA + beta-nicotinamide D-ribonucleotide + 2 H(+)</text>
        <dbReference type="Rhea" id="RHEA:60876"/>
        <dbReference type="Rhea" id="RHEA-COMP:15698"/>
        <dbReference type="Rhea" id="RHEA-COMP:15719"/>
        <dbReference type="ChEBI" id="CHEBI:14649"/>
        <dbReference type="ChEBI" id="CHEBI:15377"/>
        <dbReference type="ChEBI" id="CHEBI:15378"/>
        <dbReference type="ChEBI" id="CHEBI:144029"/>
        <dbReference type="ChEBI" id="CHEBI:144051"/>
    </reaction>
    <physiologicalReaction direction="left-to-right" evidence="1">
        <dbReference type="Rhea" id="RHEA:60877"/>
    </physiologicalReaction>
</comment>
<comment type="catalytic activity">
    <reaction evidence="1">
        <text>NAD(+) + H2O = beta-nicotinamide D-ribonucleotide + AMP + 2 H(+)</text>
        <dbReference type="Rhea" id="RHEA:11800"/>
        <dbReference type="ChEBI" id="CHEBI:14649"/>
        <dbReference type="ChEBI" id="CHEBI:15377"/>
        <dbReference type="ChEBI" id="CHEBI:15378"/>
        <dbReference type="ChEBI" id="CHEBI:57540"/>
        <dbReference type="ChEBI" id="CHEBI:456215"/>
        <dbReference type="EC" id="3.6.1.22"/>
    </reaction>
</comment>
<comment type="catalytic activity">
    <reaction evidence="1">
        <text>NADH + H2O = reduced beta-nicotinamide D-ribonucleotide + AMP + 2 H(+)</text>
        <dbReference type="Rhea" id="RHEA:48868"/>
        <dbReference type="ChEBI" id="CHEBI:15377"/>
        <dbReference type="ChEBI" id="CHEBI:15378"/>
        <dbReference type="ChEBI" id="CHEBI:57945"/>
        <dbReference type="ChEBI" id="CHEBI:90832"/>
        <dbReference type="ChEBI" id="CHEBI:456215"/>
        <dbReference type="EC" id="3.6.1.22"/>
    </reaction>
</comment>
<comment type="cofactor">
    <cofactor evidence="1">
        <name>Mg(2+)</name>
        <dbReference type="ChEBI" id="CHEBI:18420"/>
    </cofactor>
    <cofactor evidence="1">
        <name>Mn(2+)</name>
        <dbReference type="ChEBI" id="CHEBI:29035"/>
    </cofactor>
    <text evidence="1">Divalent metal cations. Mg(2+) or Mn(2+).</text>
</comment>
<comment type="cofactor">
    <cofactor evidence="1">
        <name>Zn(2+)</name>
        <dbReference type="ChEBI" id="CHEBI:29105"/>
    </cofactor>
    <text evidence="1">Binds 1 zinc ion per subunit.</text>
</comment>
<comment type="subunit">
    <text evidence="1">Homodimer.</text>
</comment>
<comment type="similarity">
    <text evidence="1">Belongs to the Nudix hydrolase family. NudC subfamily.</text>
</comment>
<name>NUDC_SALCH</name>
<keyword id="KW-0378">Hydrolase</keyword>
<keyword id="KW-0460">Magnesium</keyword>
<keyword id="KW-0464">Manganese</keyword>
<keyword id="KW-0479">Metal-binding</keyword>
<keyword id="KW-0520">NAD</keyword>
<keyword id="KW-0862">Zinc</keyword>
<feature type="chain" id="PRO_0000232120" description="NAD-capped RNA hydrolase NudC">
    <location>
        <begin position="1"/>
        <end position="257"/>
    </location>
</feature>
<feature type="domain" description="Nudix hydrolase" evidence="1">
    <location>
        <begin position="125"/>
        <end position="248"/>
    </location>
</feature>
<feature type="short sequence motif" description="Nudix box" evidence="1">
    <location>
        <begin position="159"/>
        <end position="180"/>
    </location>
</feature>
<feature type="binding site" evidence="1">
    <location>
        <position position="69"/>
    </location>
    <ligand>
        <name>substrate</name>
    </ligand>
</feature>
<feature type="binding site" evidence="1">
    <location>
        <position position="98"/>
    </location>
    <ligand>
        <name>Zn(2+)</name>
        <dbReference type="ChEBI" id="CHEBI:29105"/>
    </ligand>
</feature>
<feature type="binding site" evidence="1">
    <location>
        <position position="101"/>
    </location>
    <ligand>
        <name>Zn(2+)</name>
        <dbReference type="ChEBI" id="CHEBI:29105"/>
    </ligand>
</feature>
<feature type="binding site" evidence="1">
    <location>
        <position position="111"/>
    </location>
    <ligand>
        <name>substrate</name>
    </ligand>
</feature>
<feature type="binding site" evidence="1">
    <location>
        <position position="116"/>
    </location>
    <ligand>
        <name>Zn(2+)</name>
        <dbReference type="ChEBI" id="CHEBI:29105"/>
    </ligand>
</feature>
<feature type="binding site" evidence="1">
    <location>
        <position position="119"/>
    </location>
    <ligand>
        <name>Zn(2+)</name>
        <dbReference type="ChEBI" id="CHEBI:29105"/>
    </ligand>
</feature>
<feature type="binding site" evidence="1">
    <location>
        <position position="124"/>
    </location>
    <ligand>
        <name>substrate</name>
    </ligand>
</feature>
<feature type="binding site" evidence="1">
    <location>
        <position position="158"/>
    </location>
    <ligand>
        <name>a divalent metal cation</name>
        <dbReference type="ChEBI" id="CHEBI:60240"/>
        <label>1</label>
    </ligand>
</feature>
<feature type="binding site" evidence="1">
    <location>
        <position position="174"/>
    </location>
    <ligand>
        <name>a divalent metal cation</name>
        <dbReference type="ChEBI" id="CHEBI:60240"/>
        <label>2</label>
    </ligand>
</feature>
<feature type="binding site" evidence="1">
    <location>
        <position position="174"/>
    </location>
    <ligand>
        <name>a divalent metal cation</name>
        <dbReference type="ChEBI" id="CHEBI:60240"/>
        <label>3</label>
    </ligand>
</feature>
<feature type="binding site" evidence="1">
    <location>
        <position position="178"/>
    </location>
    <ligand>
        <name>a divalent metal cation</name>
        <dbReference type="ChEBI" id="CHEBI:60240"/>
        <label>1</label>
    </ligand>
</feature>
<feature type="binding site" evidence="1">
    <location>
        <position position="178"/>
    </location>
    <ligand>
        <name>a divalent metal cation</name>
        <dbReference type="ChEBI" id="CHEBI:60240"/>
        <label>3</label>
    </ligand>
</feature>
<feature type="binding site" evidence="1">
    <location>
        <begin position="192"/>
        <end position="199"/>
    </location>
    <ligand>
        <name>substrate</name>
    </ligand>
</feature>
<feature type="binding site" evidence="1">
    <location>
        <position position="219"/>
    </location>
    <ligand>
        <name>a divalent metal cation</name>
        <dbReference type="ChEBI" id="CHEBI:60240"/>
        <label>1</label>
    </ligand>
</feature>
<feature type="binding site" evidence="1">
    <location>
        <position position="219"/>
    </location>
    <ligand>
        <name>a divalent metal cation</name>
        <dbReference type="ChEBI" id="CHEBI:60240"/>
        <label>3</label>
    </ligand>
</feature>
<feature type="binding site" evidence="1">
    <location>
        <position position="241"/>
    </location>
    <ligand>
        <name>substrate</name>
    </ligand>
</feature>
<organism>
    <name type="scientific">Salmonella choleraesuis (strain SC-B67)</name>
    <dbReference type="NCBI Taxonomy" id="321314"/>
    <lineage>
        <taxon>Bacteria</taxon>
        <taxon>Pseudomonadati</taxon>
        <taxon>Pseudomonadota</taxon>
        <taxon>Gammaproteobacteria</taxon>
        <taxon>Enterobacterales</taxon>
        <taxon>Enterobacteriaceae</taxon>
        <taxon>Salmonella</taxon>
    </lineage>
</organism>
<reference key="1">
    <citation type="journal article" date="2005" name="Nucleic Acids Res.">
        <title>The genome sequence of Salmonella enterica serovar Choleraesuis, a highly invasive and resistant zoonotic pathogen.</title>
        <authorList>
            <person name="Chiu C.-H."/>
            <person name="Tang P."/>
            <person name="Chu C."/>
            <person name="Hu S."/>
            <person name="Bao Q."/>
            <person name="Yu J."/>
            <person name="Chou Y.-Y."/>
            <person name="Wang H.-S."/>
            <person name="Lee Y.-S."/>
        </authorList>
    </citation>
    <scope>NUCLEOTIDE SEQUENCE [LARGE SCALE GENOMIC DNA]</scope>
    <source>
        <strain>SC-B67</strain>
    </source>
</reference>
<proteinExistence type="inferred from homology"/>
<accession>Q57H59</accession>
<gene>
    <name evidence="1" type="primary">nudC</name>
    <name type="ordered locus">SCH_4047</name>
</gene>
<evidence type="ECO:0000255" key="1">
    <source>
        <dbReference type="HAMAP-Rule" id="MF_00297"/>
    </source>
</evidence>
<dbReference type="EC" id="3.6.1.-" evidence="1"/>
<dbReference type="EC" id="3.6.1.22" evidence="1"/>
<dbReference type="EMBL" id="AE017220">
    <property type="protein sequence ID" value="AAX67953.1"/>
    <property type="molecule type" value="Genomic_DNA"/>
</dbReference>
<dbReference type="RefSeq" id="WP_000373957.1">
    <property type="nucleotide sequence ID" value="NC_006905.1"/>
</dbReference>
<dbReference type="SMR" id="Q57H59"/>
<dbReference type="KEGG" id="sec:SCH_4047"/>
<dbReference type="HOGENOM" id="CLU_037162_0_1_6"/>
<dbReference type="Proteomes" id="UP000000538">
    <property type="component" value="Chromosome"/>
</dbReference>
<dbReference type="GO" id="GO:0005829">
    <property type="term" value="C:cytosol"/>
    <property type="evidence" value="ECO:0007669"/>
    <property type="project" value="TreeGrafter"/>
</dbReference>
<dbReference type="GO" id="GO:0000287">
    <property type="term" value="F:magnesium ion binding"/>
    <property type="evidence" value="ECO:0007669"/>
    <property type="project" value="UniProtKB-UniRule"/>
</dbReference>
<dbReference type="GO" id="GO:0030145">
    <property type="term" value="F:manganese ion binding"/>
    <property type="evidence" value="ECO:0007669"/>
    <property type="project" value="UniProtKB-UniRule"/>
</dbReference>
<dbReference type="GO" id="GO:0000210">
    <property type="term" value="F:NAD+ diphosphatase activity"/>
    <property type="evidence" value="ECO:0007669"/>
    <property type="project" value="UniProtKB-UniRule"/>
</dbReference>
<dbReference type="GO" id="GO:0035529">
    <property type="term" value="F:NADH pyrophosphatase activity"/>
    <property type="evidence" value="ECO:0007669"/>
    <property type="project" value="TreeGrafter"/>
</dbReference>
<dbReference type="GO" id="GO:0110153">
    <property type="term" value="F:RNA NAD-cap (NMN-forming) hydrolase activity"/>
    <property type="evidence" value="ECO:0007669"/>
    <property type="project" value="RHEA"/>
</dbReference>
<dbReference type="GO" id="GO:0008270">
    <property type="term" value="F:zinc ion binding"/>
    <property type="evidence" value="ECO:0007669"/>
    <property type="project" value="UniProtKB-UniRule"/>
</dbReference>
<dbReference type="GO" id="GO:0019677">
    <property type="term" value="P:NAD catabolic process"/>
    <property type="evidence" value="ECO:0007669"/>
    <property type="project" value="TreeGrafter"/>
</dbReference>
<dbReference type="GO" id="GO:0006734">
    <property type="term" value="P:NADH metabolic process"/>
    <property type="evidence" value="ECO:0007669"/>
    <property type="project" value="TreeGrafter"/>
</dbReference>
<dbReference type="GO" id="GO:0006742">
    <property type="term" value="P:NADP catabolic process"/>
    <property type="evidence" value="ECO:0007669"/>
    <property type="project" value="TreeGrafter"/>
</dbReference>
<dbReference type="CDD" id="cd03429">
    <property type="entry name" value="NUDIX_NADH_pyrophosphatase_Nudt13"/>
    <property type="match status" value="1"/>
</dbReference>
<dbReference type="FunFam" id="3.90.79.10:FF:000004">
    <property type="entry name" value="NADH pyrophosphatase"/>
    <property type="match status" value="1"/>
</dbReference>
<dbReference type="FunFam" id="3.90.79.20:FF:000001">
    <property type="entry name" value="NADH pyrophosphatase"/>
    <property type="match status" value="1"/>
</dbReference>
<dbReference type="Gene3D" id="3.90.79.20">
    <property type="match status" value="1"/>
</dbReference>
<dbReference type="Gene3D" id="3.90.79.10">
    <property type="entry name" value="Nucleoside Triphosphate Pyrophosphohydrolase"/>
    <property type="match status" value="1"/>
</dbReference>
<dbReference type="HAMAP" id="MF_00297">
    <property type="entry name" value="Nudix_NudC"/>
    <property type="match status" value="1"/>
</dbReference>
<dbReference type="InterPro" id="IPR050241">
    <property type="entry name" value="NAD-cap_RNA_hydrolase_NudC"/>
</dbReference>
<dbReference type="InterPro" id="IPR049734">
    <property type="entry name" value="NudC-like_C"/>
</dbReference>
<dbReference type="InterPro" id="IPR015797">
    <property type="entry name" value="NUDIX_hydrolase-like_dom_sf"/>
</dbReference>
<dbReference type="InterPro" id="IPR020084">
    <property type="entry name" value="NUDIX_hydrolase_CS"/>
</dbReference>
<dbReference type="InterPro" id="IPR000086">
    <property type="entry name" value="NUDIX_hydrolase_dom"/>
</dbReference>
<dbReference type="InterPro" id="IPR022925">
    <property type="entry name" value="RNA_Hydrolase_NudC"/>
</dbReference>
<dbReference type="InterPro" id="IPR015376">
    <property type="entry name" value="Znr_NADH_PPase"/>
</dbReference>
<dbReference type="NCBIfam" id="NF001299">
    <property type="entry name" value="PRK00241.1"/>
    <property type="match status" value="1"/>
</dbReference>
<dbReference type="PANTHER" id="PTHR42904:SF6">
    <property type="entry name" value="NAD-CAPPED RNA HYDROLASE NUDT12"/>
    <property type="match status" value="1"/>
</dbReference>
<dbReference type="PANTHER" id="PTHR42904">
    <property type="entry name" value="NUDIX HYDROLASE, NUDC SUBFAMILY"/>
    <property type="match status" value="1"/>
</dbReference>
<dbReference type="Pfam" id="PF00293">
    <property type="entry name" value="NUDIX"/>
    <property type="match status" value="1"/>
</dbReference>
<dbReference type="Pfam" id="PF09297">
    <property type="entry name" value="Zn_ribbon_NUD"/>
    <property type="match status" value="1"/>
</dbReference>
<dbReference type="SUPFAM" id="SSF55811">
    <property type="entry name" value="Nudix"/>
    <property type="match status" value="2"/>
</dbReference>
<dbReference type="PROSITE" id="PS51462">
    <property type="entry name" value="NUDIX"/>
    <property type="match status" value="1"/>
</dbReference>
<dbReference type="PROSITE" id="PS00893">
    <property type="entry name" value="NUDIX_BOX"/>
    <property type="match status" value="1"/>
</dbReference>